<reference key="1">
    <citation type="journal article" date="2008" name="BMC Genomics">
        <title>Genomics of an extreme psychrophile, Psychromonas ingrahamii.</title>
        <authorList>
            <person name="Riley M."/>
            <person name="Staley J.T."/>
            <person name="Danchin A."/>
            <person name="Wang T.Z."/>
            <person name="Brettin T.S."/>
            <person name="Hauser L.J."/>
            <person name="Land M.L."/>
            <person name="Thompson L.S."/>
        </authorList>
    </citation>
    <scope>NUCLEOTIDE SEQUENCE [LARGE SCALE GENOMIC DNA]</scope>
    <source>
        <strain>DSM 17664 / CCUG 51855 / 37</strain>
    </source>
</reference>
<feature type="chain" id="PRO_1000083729" description="Autonomous glycyl radical cofactor">
    <location>
        <begin position="1"/>
        <end position="125"/>
    </location>
</feature>
<feature type="domain" description="Glycine radical" evidence="1">
    <location>
        <begin position="5"/>
        <end position="125"/>
    </location>
</feature>
<feature type="modified residue" description="Glycine radical" evidence="1">
    <location>
        <position position="100"/>
    </location>
</feature>
<proteinExistence type="inferred from homology"/>
<sequence length="125" mass="14167">MIQGIQITKSDNENLLNSIWLIDNEKNEARCLVAPAQYKEDQVVPASELGEYESREVAIEAPKAQEGGQHLNVNVLKRETLEDAIKHPENYPQLTIRVSGYAVRFNSLTPEQQQDVLTRTFTESL</sequence>
<accession>A1SUE3</accession>
<organism>
    <name type="scientific">Psychromonas ingrahamii (strain DSM 17664 / CCUG 51855 / 37)</name>
    <dbReference type="NCBI Taxonomy" id="357804"/>
    <lineage>
        <taxon>Bacteria</taxon>
        <taxon>Pseudomonadati</taxon>
        <taxon>Pseudomonadota</taxon>
        <taxon>Gammaproteobacteria</taxon>
        <taxon>Alteromonadales</taxon>
        <taxon>Psychromonadaceae</taxon>
        <taxon>Psychromonas</taxon>
    </lineage>
</organism>
<dbReference type="EMBL" id="CP000510">
    <property type="protein sequence ID" value="ABM03108.1"/>
    <property type="molecule type" value="Genomic_DNA"/>
</dbReference>
<dbReference type="RefSeq" id="WP_011769671.1">
    <property type="nucleotide sequence ID" value="NC_008709.1"/>
</dbReference>
<dbReference type="SMR" id="A1SUE3"/>
<dbReference type="STRING" id="357804.Ping_1281"/>
<dbReference type="KEGG" id="pin:Ping_1281"/>
<dbReference type="eggNOG" id="COG3445">
    <property type="taxonomic scope" value="Bacteria"/>
</dbReference>
<dbReference type="HOGENOM" id="CLU_133780_0_0_6"/>
<dbReference type="OrthoDB" id="9803969at2"/>
<dbReference type="Proteomes" id="UP000000639">
    <property type="component" value="Chromosome"/>
</dbReference>
<dbReference type="GO" id="GO:0005829">
    <property type="term" value="C:cytosol"/>
    <property type="evidence" value="ECO:0007669"/>
    <property type="project" value="TreeGrafter"/>
</dbReference>
<dbReference type="GO" id="GO:0008861">
    <property type="term" value="F:formate C-acetyltransferase activity"/>
    <property type="evidence" value="ECO:0007669"/>
    <property type="project" value="TreeGrafter"/>
</dbReference>
<dbReference type="Gene3D" id="3.20.70.20">
    <property type="match status" value="1"/>
</dbReference>
<dbReference type="HAMAP" id="MF_00806">
    <property type="entry name" value="GrcA"/>
    <property type="match status" value="1"/>
</dbReference>
<dbReference type="InterPro" id="IPR050244">
    <property type="entry name" value="Auton_GlycylRad_Cofactor"/>
</dbReference>
<dbReference type="InterPro" id="IPR019777">
    <property type="entry name" value="Form_AcTrfase_GR_CS"/>
</dbReference>
<dbReference type="InterPro" id="IPR001150">
    <property type="entry name" value="Gly_radical"/>
</dbReference>
<dbReference type="InterPro" id="IPR011140">
    <property type="entry name" value="Glycyl_radical_cofactor_GrcA"/>
</dbReference>
<dbReference type="NCBIfam" id="TIGR04365">
    <property type="entry name" value="spare_glycyl"/>
    <property type="match status" value="1"/>
</dbReference>
<dbReference type="PANTHER" id="PTHR30191">
    <property type="entry name" value="FORMATE ACETYLTRANSFERASE"/>
    <property type="match status" value="1"/>
</dbReference>
<dbReference type="PANTHER" id="PTHR30191:SF0">
    <property type="entry name" value="FORMATE ACETYLTRANSFERASE 1"/>
    <property type="match status" value="1"/>
</dbReference>
<dbReference type="Pfam" id="PF01228">
    <property type="entry name" value="Gly_radical"/>
    <property type="match status" value="1"/>
</dbReference>
<dbReference type="PIRSF" id="PIRSF000378">
    <property type="entry name" value="Gly_radicl_yfiD"/>
    <property type="match status" value="1"/>
</dbReference>
<dbReference type="SUPFAM" id="SSF51998">
    <property type="entry name" value="PFL-like glycyl radical enzymes"/>
    <property type="match status" value="1"/>
</dbReference>
<dbReference type="PROSITE" id="PS00850">
    <property type="entry name" value="GLY_RADICAL_1"/>
    <property type="match status" value="1"/>
</dbReference>
<dbReference type="PROSITE" id="PS51149">
    <property type="entry name" value="GLY_RADICAL_2"/>
    <property type="match status" value="1"/>
</dbReference>
<gene>
    <name evidence="1" type="primary">grcA</name>
    <name type="ordered locus">Ping_1281</name>
</gene>
<comment type="function">
    <text evidence="1">Acts as a radical domain for damaged PFL and possibly other radical proteins.</text>
</comment>
<name>GRCA_PSYIN</name>
<keyword id="KW-0556">Organic radical</keyword>
<keyword id="KW-1185">Reference proteome</keyword>
<evidence type="ECO:0000255" key="1">
    <source>
        <dbReference type="HAMAP-Rule" id="MF_00806"/>
    </source>
</evidence>
<protein>
    <recommendedName>
        <fullName evidence="1">Autonomous glycyl radical cofactor</fullName>
    </recommendedName>
</protein>